<accession>Q1BS32</accession>
<comment type="function">
    <text evidence="1">Catalyzes the hydrolysis of the adenine ring of phosphoribosyl-AMP.</text>
</comment>
<comment type="catalytic activity">
    <reaction evidence="1">
        <text>1-(5-phospho-beta-D-ribosyl)-5'-AMP + H2O = 1-(5-phospho-beta-D-ribosyl)-5-[(5-phospho-beta-D-ribosylamino)methylideneamino]imidazole-4-carboxamide</text>
        <dbReference type="Rhea" id="RHEA:20049"/>
        <dbReference type="ChEBI" id="CHEBI:15377"/>
        <dbReference type="ChEBI" id="CHEBI:58435"/>
        <dbReference type="ChEBI" id="CHEBI:59457"/>
        <dbReference type="EC" id="3.5.4.19"/>
    </reaction>
</comment>
<comment type="cofactor">
    <cofactor evidence="1">
        <name>Mg(2+)</name>
        <dbReference type="ChEBI" id="CHEBI:18420"/>
    </cofactor>
    <text evidence="1">Binds 1 Mg(2+) ion per subunit.</text>
</comment>
<comment type="cofactor">
    <cofactor evidence="1">
        <name>Zn(2+)</name>
        <dbReference type="ChEBI" id="CHEBI:29105"/>
    </cofactor>
    <text evidence="1">Binds 1 zinc ion per subunit.</text>
</comment>
<comment type="pathway">
    <text evidence="1">Amino-acid biosynthesis; L-histidine biosynthesis; L-histidine from 5-phospho-alpha-D-ribose 1-diphosphate: step 3/9.</text>
</comment>
<comment type="subunit">
    <text evidence="1">Homodimer.</text>
</comment>
<comment type="subcellular location">
    <subcellularLocation>
        <location evidence="1">Cytoplasm</location>
    </subcellularLocation>
</comment>
<comment type="similarity">
    <text evidence="1">Belongs to the PRA-CH family.</text>
</comment>
<sequence length="138" mass="15873">MNTETKSLPAWLDKVRWDDNGLVPVIAQEASTNDVLMFAWMNREALAKTIETQRAVYYSRSRKRLWFKGEESGHVQHVHEVRLDCDEDVVLLKVEQVSGIACHTGRHSCFFQKFEGTVDGGDWVAVEPVLKDPEHIYK</sequence>
<name>HIS3_BURO1</name>
<feature type="chain" id="PRO_1000063391" description="Phosphoribosyl-AMP cyclohydrolase">
    <location>
        <begin position="1"/>
        <end position="138"/>
    </location>
</feature>
<feature type="binding site" evidence="1">
    <location>
        <position position="84"/>
    </location>
    <ligand>
        <name>Mg(2+)</name>
        <dbReference type="ChEBI" id="CHEBI:18420"/>
    </ligand>
</feature>
<feature type="binding site" evidence="1">
    <location>
        <position position="85"/>
    </location>
    <ligand>
        <name>Zn(2+)</name>
        <dbReference type="ChEBI" id="CHEBI:29105"/>
        <note>ligand shared between dimeric partners</note>
    </ligand>
</feature>
<feature type="binding site" evidence="1">
    <location>
        <position position="86"/>
    </location>
    <ligand>
        <name>Mg(2+)</name>
        <dbReference type="ChEBI" id="CHEBI:18420"/>
    </ligand>
</feature>
<feature type="binding site" evidence="1">
    <location>
        <position position="88"/>
    </location>
    <ligand>
        <name>Mg(2+)</name>
        <dbReference type="ChEBI" id="CHEBI:18420"/>
    </ligand>
</feature>
<feature type="binding site" evidence="1">
    <location>
        <position position="102"/>
    </location>
    <ligand>
        <name>Zn(2+)</name>
        <dbReference type="ChEBI" id="CHEBI:29105"/>
        <note>ligand shared between dimeric partners</note>
    </ligand>
</feature>
<feature type="binding site" evidence="1">
    <location>
        <position position="109"/>
    </location>
    <ligand>
        <name>Zn(2+)</name>
        <dbReference type="ChEBI" id="CHEBI:29105"/>
        <note>ligand shared between dimeric partners</note>
    </ligand>
</feature>
<reference key="1">
    <citation type="submission" date="2006-05" db="EMBL/GenBank/DDBJ databases">
        <title>Complete sequence of chromosome 1 of Burkholderia cenocepacia AU 1054.</title>
        <authorList>
            <consortium name="US DOE Joint Genome Institute"/>
            <person name="Copeland A."/>
            <person name="Lucas S."/>
            <person name="Lapidus A."/>
            <person name="Barry K."/>
            <person name="Detter J.C."/>
            <person name="Glavina del Rio T."/>
            <person name="Hammon N."/>
            <person name="Israni S."/>
            <person name="Dalin E."/>
            <person name="Tice H."/>
            <person name="Pitluck S."/>
            <person name="Chain P."/>
            <person name="Malfatti S."/>
            <person name="Shin M."/>
            <person name="Vergez L."/>
            <person name="Schmutz J."/>
            <person name="Larimer F."/>
            <person name="Land M."/>
            <person name="Hauser L."/>
            <person name="Kyrpides N."/>
            <person name="Lykidis A."/>
            <person name="LiPuma J.J."/>
            <person name="Konstantinidis K."/>
            <person name="Tiedje J.M."/>
            <person name="Richardson P."/>
        </authorList>
    </citation>
    <scope>NUCLEOTIDE SEQUENCE [LARGE SCALE GENOMIC DNA]</scope>
    <source>
        <strain>AU 1054</strain>
    </source>
</reference>
<protein>
    <recommendedName>
        <fullName evidence="1">Phosphoribosyl-AMP cyclohydrolase</fullName>
        <shortName evidence="1">PRA-CH</shortName>
        <ecNumber evidence="1">3.5.4.19</ecNumber>
    </recommendedName>
</protein>
<gene>
    <name evidence="1" type="primary">hisI</name>
    <name type="ordered locus">Bcen_2675</name>
</gene>
<proteinExistence type="inferred from homology"/>
<organism>
    <name type="scientific">Burkholderia orbicola (strain AU 1054)</name>
    <dbReference type="NCBI Taxonomy" id="331271"/>
    <lineage>
        <taxon>Bacteria</taxon>
        <taxon>Pseudomonadati</taxon>
        <taxon>Pseudomonadota</taxon>
        <taxon>Betaproteobacteria</taxon>
        <taxon>Burkholderiales</taxon>
        <taxon>Burkholderiaceae</taxon>
        <taxon>Burkholderia</taxon>
        <taxon>Burkholderia cepacia complex</taxon>
        <taxon>Burkholderia orbicola</taxon>
    </lineage>
</organism>
<dbReference type="EC" id="3.5.4.19" evidence="1"/>
<dbReference type="EMBL" id="CP000378">
    <property type="protein sequence ID" value="ABF77573.1"/>
    <property type="molecule type" value="Genomic_DNA"/>
</dbReference>
<dbReference type="SMR" id="Q1BS32"/>
<dbReference type="HOGENOM" id="CLU_048577_5_0_4"/>
<dbReference type="UniPathway" id="UPA00031">
    <property type="reaction ID" value="UER00008"/>
</dbReference>
<dbReference type="GO" id="GO:0005737">
    <property type="term" value="C:cytoplasm"/>
    <property type="evidence" value="ECO:0007669"/>
    <property type="project" value="UniProtKB-SubCell"/>
</dbReference>
<dbReference type="GO" id="GO:0000287">
    <property type="term" value="F:magnesium ion binding"/>
    <property type="evidence" value="ECO:0007669"/>
    <property type="project" value="UniProtKB-UniRule"/>
</dbReference>
<dbReference type="GO" id="GO:0004635">
    <property type="term" value="F:phosphoribosyl-AMP cyclohydrolase activity"/>
    <property type="evidence" value="ECO:0007669"/>
    <property type="project" value="UniProtKB-UniRule"/>
</dbReference>
<dbReference type="GO" id="GO:0008270">
    <property type="term" value="F:zinc ion binding"/>
    <property type="evidence" value="ECO:0007669"/>
    <property type="project" value="UniProtKB-UniRule"/>
</dbReference>
<dbReference type="GO" id="GO:0000105">
    <property type="term" value="P:L-histidine biosynthetic process"/>
    <property type="evidence" value="ECO:0007669"/>
    <property type="project" value="UniProtKB-UniRule"/>
</dbReference>
<dbReference type="FunFam" id="3.10.20.810:FF:000001">
    <property type="entry name" value="Histidine biosynthesis bifunctional protein HisIE"/>
    <property type="match status" value="1"/>
</dbReference>
<dbReference type="Gene3D" id="3.10.20.810">
    <property type="entry name" value="Phosphoribosyl-AMP cyclohydrolase"/>
    <property type="match status" value="1"/>
</dbReference>
<dbReference type="HAMAP" id="MF_01021">
    <property type="entry name" value="HisI"/>
    <property type="match status" value="1"/>
</dbReference>
<dbReference type="InterPro" id="IPR026660">
    <property type="entry name" value="PRA-CH"/>
</dbReference>
<dbReference type="InterPro" id="IPR002496">
    <property type="entry name" value="PRib_AMP_CycHydrolase_dom"/>
</dbReference>
<dbReference type="InterPro" id="IPR038019">
    <property type="entry name" value="PRib_AMP_CycHydrolase_sf"/>
</dbReference>
<dbReference type="NCBIfam" id="NF000768">
    <property type="entry name" value="PRK00051.1"/>
    <property type="match status" value="1"/>
</dbReference>
<dbReference type="PANTHER" id="PTHR42945">
    <property type="entry name" value="HISTIDINE BIOSYNTHESIS BIFUNCTIONAL PROTEIN"/>
    <property type="match status" value="1"/>
</dbReference>
<dbReference type="PANTHER" id="PTHR42945:SF1">
    <property type="entry name" value="HISTIDINE BIOSYNTHESIS BIFUNCTIONAL PROTEIN HIS7"/>
    <property type="match status" value="1"/>
</dbReference>
<dbReference type="Pfam" id="PF01502">
    <property type="entry name" value="PRA-CH"/>
    <property type="match status" value="1"/>
</dbReference>
<dbReference type="SUPFAM" id="SSF141734">
    <property type="entry name" value="HisI-like"/>
    <property type="match status" value="1"/>
</dbReference>
<evidence type="ECO:0000255" key="1">
    <source>
        <dbReference type="HAMAP-Rule" id="MF_01021"/>
    </source>
</evidence>
<keyword id="KW-0028">Amino-acid biosynthesis</keyword>
<keyword id="KW-0963">Cytoplasm</keyword>
<keyword id="KW-0368">Histidine biosynthesis</keyword>
<keyword id="KW-0378">Hydrolase</keyword>
<keyword id="KW-0460">Magnesium</keyword>
<keyword id="KW-0479">Metal-binding</keyword>
<keyword id="KW-0862">Zinc</keyword>